<organism>
    <name type="scientific">Escherichia coli O139:H28 (strain E24377A / ETEC)</name>
    <dbReference type="NCBI Taxonomy" id="331111"/>
    <lineage>
        <taxon>Bacteria</taxon>
        <taxon>Pseudomonadati</taxon>
        <taxon>Pseudomonadota</taxon>
        <taxon>Gammaproteobacteria</taxon>
        <taxon>Enterobacterales</taxon>
        <taxon>Enterobacteriaceae</taxon>
        <taxon>Escherichia</taxon>
    </lineage>
</organism>
<dbReference type="EMBL" id="CP000800">
    <property type="protein sequence ID" value="ABV20651.1"/>
    <property type="molecule type" value="Genomic_DNA"/>
</dbReference>
<dbReference type="RefSeq" id="WP_000288710.1">
    <property type="nucleotide sequence ID" value="NC_009801.1"/>
</dbReference>
<dbReference type="SMR" id="A7ZK62"/>
<dbReference type="GeneID" id="93776456"/>
<dbReference type="KEGG" id="ecw:EcE24377A_1072"/>
<dbReference type="HOGENOM" id="CLU_118972_1_0_6"/>
<dbReference type="Proteomes" id="UP000001122">
    <property type="component" value="Chromosome"/>
</dbReference>
<dbReference type="GO" id="GO:0000917">
    <property type="term" value="P:division septum assembly"/>
    <property type="evidence" value="ECO:0007669"/>
    <property type="project" value="UniProtKB-KW"/>
</dbReference>
<dbReference type="GO" id="GO:0006281">
    <property type="term" value="P:DNA repair"/>
    <property type="evidence" value="ECO:0007669"/>
    <property type="project" value="TreeGrafter"/>
</dbReference>
<dbReference type="GO" id="GO:0051782">
    <property type="term" value="P:negative regulation of cell division"/>
    <property type="evidence" value="ECO:0007669"/>
    <property type="project" value="UniProtKB-UniRule"/>
</dbReference>
<dbReference type="GO" id="GO:0009432">
    <property type="term" value="P:SOS response"/>
    <property type="evidence" value="ECO:0007669"/>
    <property type="project" value="UniProtKB-UniRule"/>
</dbReference>
<dbReference type="FunFam" id="3.40.50.300:FF:000417">
    <property type="entry name" value="Cell division inhibitor SulA"/>
    <property type="match status" value="1"/>
</dbReference>
<dbReference type="Gene3D" id="3.40.50.300">
    <property type="entry name" value="P-loop containing nucleotide triphosphate hydrolases"/>
    <property type="match status" value="1"/>
</dbReference>
<dbReference type="HAMAP" id="MF_01179">
    <property type="entry name" value="SulA"/>
    <property type="match status" value="1"/>
</dbReference>
<dbReference type="InterPro" id="IPR004596">
    <property type="entry name" value="Cell_div_suppressor_SulA"/>
</dbReference>
<dbReference type="InterPro" id="IPR027417">
    <property type="entry name" value="P-loop_NTPase"/>
</dbReference>
<dbReference type="InterPro" id="IPR050356">
    <property type="entry name" value="SulA_CellDiv_inhibitor"/>
</dbReference>
<dbReference type="InterPro" id="IPR047696">
    <property type="entry name" value="SulA_enterobact"/>
</dbReference>
<dbReference type="NCBIfam" id="NF007892">
    <property type="entry name" value="PRK10595.1"/>
    <property type="match status" value="1"/>
</dbReference>
<dbReference type="NCBIfam" id="TIGR00623">
    <property type="entry name" value="SOS_SulA_coli"/>
    <property type="match status" value="1"/>
</dbReference>
<dbReference type="PANTHER" id="PTHR35369">
    <property type="entry name" value="BLR3025 PROTEIN-RELATED"/>
    <property type="match status" value="1"/>
</dbReference>
<dbReference type="PANTHER" id="PTHR35369:SF4">
    <property type="entry name" value="CELL DIVISION INHIBITOR SULA"/>
    <property type="match status" value="1"/>
</dbReference>
<dbReference type="Pfam" id="PF03846">
    <property type="entry name" value="SulA"/>
    <property type="match status" value="1"/>
</dbReference>
<dbReference type="PIRSF" id="PIRSF003093">
    <property type="entry name" value="SulA"/>
    <property type="match status" value="1"/>
</dbReference>
<dbReference type="SUPFAM" id="SSF52540">
    <property type="entry name" value="P-loop containing nucleoside triphosphate hydrolases"/>
    <property type="match status" value="1"/>
</dbReference>
<keyword id="KW-0131">Cell cycle</keyword>
<keyword id="KW-0132">Cell division</keyword>
<keyword id="KW-0227">DNA damage</keyword>
<keyword id="KW-1185">Reference proteome</keyword>
<keyword id="KW-0717">Septation</keyword>
<keyword id="KW-0742">SOS response</keyword>
<sequence>MYTSGYAHRSSSFSSAASKIARVSTENTTAGLISEVVYREDQPMMTQLLLLPLLQQLGQQSRWQLWLTPQQKLSREWVQASGLPLTKVMQISQLSPCHTVESMVRALRTGNYSVVIGWLADDLTEEEHAELVDAANEGNAMGFIMRPVSASSHATRQLSGLKIHSNLYH</sequence>
<name>SULA_ECO24</name>
<gene>
    <name evidence="1" type="primary">sulA</name>
    <name type="ordered locus">EcE24377A_1072</name>
</gene>
<accession>A7ZK62</accession>
<comment type="function">
    <text evidence="1">Component of the SOS system and an inhibitor of cell division. Accumulation of SulA causes rapid cessation of cell division and the appearance of long, non-septate filaments. In the presence of GTP, binds a polymerization-competent form of FtsZ in a 1:1 ratio, thus inhibiting FtsZ polymerization and therefore preventing it from participating in the assembly of the Z ring. This mechanism prevents the premature segregation of damaged DNA to daughter cells during cell division.</text>
</comment>
<comment type="subunit">
    <text evidence="1">Interacts with FtsZ.</text>
</comment>
<comment type="induction">
    <text evidence="1">By DNA damage, as part of the SOS response.</text>
</comment>
<comment type="PTM">
    <text evidence="1">Is rapidly cleaved and degraded by the Lon protease once DNA damage is repaired.</text>
</comment>
<comment type="similarity">
    <text evidence="1">Belongs to the SulA family.</text>
</comment>
<feature type="chain" id="PRO_0000343962" description="Cell division inhibitor SulA">
    <location>
        <begin position="1"/>
        <end position="169"/>
    </location>
</feature>
<feature type="region of interest" description="FtsZ binding" evidence="1">
    <location>
        <begin position="106"/>
        <end position="112"/>
    </location>
</feature>
<feature type="region of interest" description="Lon protease binding" evidence="1">
    <location>
        <begin position="162"/>
        <end position="169"/>
    </location>
</feature>
<feature type="site" description="Essential for degradation by Lon protease" evidence="1">
    <location>
        <position position="169"/>
    </location>
</feature>
<evidence type="ECO:0000255" key="1">
    <source>
        <dbReference type="HAMAP-Rule" id="MF_01179"/>
    </source>
</evidence>
<reference key="1">
    <citation type="journal article" date="2008" name="J. Bacteriol.">
        <title>The pangenome structure of Escherichia coli: comparative genomic analysis of E. coli commensal and pathogenic isolates.</title>
        <authorList>
            <person name="Rasko D.A."/>
            <person name="Rosovitz M.J."/>
            <person name="Myers G.S.A."/>
            <person name="Mongodin E.F."/>
            <person name="Fricke W.F."/>
            <person name="Gajer P."/>
            <person name="Crabtree J."/>
            <person name="Sebaihia M."/>
            <person name="Thomson N.R."/>
            <person name="Chaudhuri R."/>
            <person name="Henderson I.R."/>
            <person name="Sperandio V."/>
            <person name="Ravel J."/>
        </authorList>
    </citation>
    <scope>NUCLEOTIDE SEQUENCE [LARGE SCALE GENOMIC DNA]</scope>
    <source>
        <strain>E24377A / ETEC</strain>
    </source>
</reference>
<proteinExistence type="inferred from homology"/>
<protein>
    <recommendedName>
        <fullName evidence="1">Cell division inhibitor SulA</fullName>
    </recommendedName>
</protein>